<gene>
    <name evidence="1" type="primary">moaA</name>
    <name type="ordered locus">PputW619_3906</name>
</gene>
<feature type="chain" id="PRO_1000139335" description="GTP 3',8-cyclase">
    <location>
        <begin position="1"/>
        <end position="334"/>
    </location>
</feature>
<feature type="domain" description="Radical SAM core" evidence="2">
    <location>
        <begin position="11"/>
        <end position="236"/>
    </location>
</feature>
<feature type="binding site" evidence="1">
    <location>
        <position position="20"/>
    </location>
    <ligand>
        <name>GTP</name>
        <dbReference type="ChEBI" id="CHEBI:37565"/>
    </ligand>
</feature>
<feature type="binding site" evidence="1">
    <location>
        <position position="27"/>
    </location>
    <ligand>
        <name>[4Fe-4S] cluster</name>
        <dbReference type="ChEBI" id="CHEBI:49883"/>
        <label>1</label>
        <note>4Fe-4S-S-AdoMet</note>
    </ligand>
</feature>
<feature type="binding site" evidence="1">
    <location>
        <position position="31"/>
    </location>
    <ligand>
        <name>[4Fe-4S] cluster</name>
        <dbReference type="ChEBI" id="CHEBI:49883"/>
        <label>1</label>
        <note>4Fe-4S-S-AdoMet</note>
    </ligand>
</feature>
<feature type="binding site" evidence="1">
    <location>
        <position position="33"/>
    </location>
    <ligand>
        <name>S-adenosyl-L-methionine</name>
        <dbReference type="ChEBI" id="CHEBI:59789"/>
    </ligand>
</feature>
<feature type="binding site" evidence="1">
    <location>
        <position position="34"/>
    </location>
    <ligand>
        <name>[4Fe-4S] cluster</name>
        <dbReference type="ChEBI" id="CHEBI:49883"/>
        <label>1</label>
        <note>4Fe-4S-S-AdoMet</note>
    </ligand>
</feature>
<feature type="binding site" evidence="1">
    <location>
        <position position="69"/>
    </location>
    <ligand>
        <name>GTP</name>
        <dbReference type="ChEBI" id="CHEBI:37565"/>
    </ligand>
</feature>
<feature type="binding site" evidence="1">
    <location>
        <position position="73"/>
    </location>
    <ligand>
        <name>S-adenosyl-L-methionine</name>
        <dbReference type="ChEBI" id="CHEBI:59789"/>
    </ligand>
</feature>
<feature type="binding site" evidence="1">
    <location>
        <position position="100"/>
    </location>
    <ligand>
        <name>GTP</name>
        <dbReference type="ChEBI" id="CHEBI:37565"/>
    </ligand>
</feature>
<feature type="binding site" evidence="1">
    <location>
        <position position="124"/>
    </location>
    <ligand>
        <name>S-adenosyl-L-methionine</name>
        <dbReference type="ChEBI" id="CHEBI:59789"/>
    </ligand>
</feature>
<feature type="binding site" evidence="1">
    <location>
        <position position="161"/>
    </location>
    <ligand>
        <name>GTP</name>
        <dbReference type="ChEBI" id="CHEBI:37565"/>
    </ligand>
</feature>
<feature type="binding site" evidence="1">
    <location>
        <position position="195"/>
    </location>
    <ligand>
        <name>S-adenosyl-L-methionine</name>
        <dbReference type="ChEBI" id="CHEBI:59789"/>
    </ligand>
</feature>
<feature type="binding site" evidence="1">
    <location>
        <position position="260"/>
    </location>
    <ligand>
        <name>[4Fe-4S] cluster</name>
        <dbReference type="ChEBI" id="CHEBI:49883"/>
        <label>2</label>
        <note>4Fe-4S-substrate</note>
    </ligand>
</feature>
<feature type="binding site" evidence="1">
    <location>
        <position position="263"/>
    </location>
    <ligand>
        <name>[4Fe-4S] cluster</name>
        <dbReference type="ChEBI" id="CHEBI:49883"/>
        <label>2</label>
        <note>4Fe-4S-substrate</note>
    </ligand>
</feature>
<feature type="binding site" evidence="1">
    <location>
        <begin position="265"/>
        <end position="267"/>
    </location>
    <ligand>
        <name>GTP</name>
        <dbReference type="ChEBI" id="CHEBI:37565"/>
    </ligand>
</feature>
<feature type="binding site" evidence="1">
    <location>
        <position position="277"/>
    </location>
    <ligand>
        <name>[4Fe-4S] cluster</name>
        <dbReference type="ChEBI" id="CHEBI:49883"/>
        <label>2</label>
        <note>4Fe-4S-substrate</note>
    </ligand>
</feature>
<keyword id="KW-0004">4Fe-4S</keyword>
<keyword id="KW-0342">GTP-binding</keyword>
<keyword id="KW-0408">Iron</keyword>
<keyword id="KW-0411">Iron-sulfur</keyword>
<keyword id="KW-0456">Lyase</keyword>
<keyword id="KW-0479">Metal-binding</keyword>
<keyword id="KW-0501">Molybdenum cofactor biosynthesis</keyword>
<keyword id="KW-0547">Nucleotide-binding</keyword>
<keyword id="KW-0949">S-adenosyl-L-methionine</keyword>
<name>MOAA_PSEPW</name>
<proteinExistence type="inferred from homology"/>
<sequence>MEQNSRALIDGFNRKIDYLRMSVTDRCDFRCVYCMAEDMQFLPRQQILSLEELFQVAERFVALGTRKIRLTGGEPLVRQGIVDLCGRIAALPGLRELCMTSNGSQLPRLAQPLFDAGLSRLNISLDSLDAERFKQLTRTGDLAQVIAGIDAARRAGFQRIKLNCVVLKGRNDDELVDLVRFAIDRELDITFIEEMPLGVISEHERGESFCSSDEVRARLAEQFTLIESTESSQGPARYWRLAEASSTRVGFISPHSHNFCATCNRVRLTVEGRLLLCLGNEHSMDLKQVLRAHPGDAERLEKAIRDSLHLKPYRHHFEVGGDVQILRFMNMTGG</sequence>
<comment type="function">
    <text evidence="1">Catalyzes the cyclization of GTP to (8S)-3',8-cyclo-7,8-dihydroguanosine 5'-triphosphate.</text>
</comment>
<comment type="catalytic activity">
    <reaction evidence="1">
        <text>GTP + AH2 + S-adenosyl-L-methionine = (8S)-3',8-cyclo-7,8-dihydroguanosine 5'-triphosphate + 5'-deoxyadenosine + L-methionine + A + H(+)</text>
        <dbReference type="Rhea" id="RHEA:49576"/>
        <dbReference type="ChEBI" id="CHEBI:13193"/>
        <dbReference type="ChEBI" id="CHEBI:15378"/>
        <dbReference type="ChEBI" id="CHEBI:17319"/>
        <dbReference type="ChEBI" id="CHEBI:17499"/>
        <dbReference type="ChEBI" id="CHEBI:37565"/>
        <dbReference type="ChEBI" id="CHEBI:57844"/>
        <dbReference type="ChEBI" id="CHEBI:59789"/>
        <dbReference type="ChEBI" id="CHEBI:131766"/>
        <dbReference type="EC" id="4.1.99.22"/>
    </reaction>
</comment>
<comment type="cofactor">
    <cofactor evidence="1">
        <name>[4Fe-4S] cluster</name>
        <dbReference type="ChEBI" id="CHEBI:49883"/>
    </cofactor>
    <text evidence="1">Binds 2 [4Fe-4S] clusters. Binds 1 [4Fe-4S] cluster coordinated with 3 cysteines and an exchangeable S-adenosyl-L-methionine and 1 [4Fe-4S] cluster coordinated with 3 cysteines and the GTP-derived substrate.</text>
</comment>
<comment type="pathway">
    <text evidence="1">Cofactor biosynthesis; molybdopterin biosynthesis.</text>
</comment>
<comment type="subunit">
    <text evidence="1">Monomer and homodimer.</text>
</comment>
<comment type="similarity">
    <text evidence="1">Belongs to the radical SAM superfamily. MoaA family.</text>
</comment>
<protein>
    <recommendedName>
        <fullName evidence="1">GTP 3',8-cyclase</fullName>
        <ecNumber evidence="1">4.1.99.22</ecNumber>
    </recommendedName>
    <alternativeName>
        <fullName evidence="1">Molybdenum cofactor biosynthesis protein A</fullName>
    </alternativeName>
</protein>
<evidence type="ECO:0000255" key="1">
    <source>
        <dbReference type="HAMAP-Rule" id="MF_01225"/>
    </source>
</evidence>
<evidence type="ECO:0000255" key="2">
    <source>
        <dbReference type="PROSITE-ProRule" id="PRU01266"/>
    </source>
</evidence>
<accession>B1JCW0</accession>
<reference key="1">
    <citation type="submission" date="2008-02" db="EMBL/GenBank/DDBJ databases">
        <title>Complete sequence of Pseudomonas putida W619.</title>
        <authorList>
            <person name="Copeland A."/>
            <person name="Lucas S."/>
            <person name="Lapidus A."/>
            <person name="Barry K."/>
            <person name="Detter J.C."/>
            <person name="Glavina del Rio T."/>
            <person name="Dalin E."/>
            <person name="Tice H."/>
            <person name="Pitluck S."/>
            <person name="Chain P."/>
            <person name="Malfatti S."/>
            <person name="Shin M."/>
            <person name="Vergez L."/>
            <person name="Schmutz J."/>
            <person name="Larimer F."/>
            <person name="Land M."/>
            <person name="Hauser L."/>
            <person name="Kyrpides N."/>
            <person name="Kim E."/>
            <person name="Taghavi S."/>
            <person name="Vangronsveld D."/>
            <person name="van der Lelie D."/>
            <person name="Richardson P."/>
        </authorList>
    </citation>
    <scope>NUCLEOTIDE SEQUENCE [LARGE SCALE GENOMIC DNA]</scope>
    <source>
        <strain>W619</strain>
    </source>
</reference>
<organism>
    <name type="scientific">Pseudomonas putida (strain W619)</name>
    <dbReference type="NCBI Taxonomy" id="390235"/>
    <lineage>
        <taxon>Bacteria</taxon>
        <taxon>Pseudomonadati</taxon>
        <taxon>Pseudomonadota</taxon>
        <taxon>Gammaproteobacteria</taxon>
        <taxon>Pseudomonadales</taxon>
        <taxon>Pseudomonadaceae</taxon>
        <taxon>Pseudomonas</taxon>
    </lineage>
</organism>
<dbReference type="EC" id="4.1.99.22" evidence="1"/>
<dbReference type="EMBL" id="CP000949">
    <property type="protein sequence ID" value="ACA74386.1"/>
    <property type="molecule type" value="Genomic_DNA"/>
</dbReference>
<dbReference type="SMR" id="B1JCW0"/>
<dbReference type="STRING" id="390235.PputW619_3906"/>
<dbReference type="KEGG" id="ppw:PputW619_3906"/>
<dbReference type="eggNOG" id="COG2896">
    <property type="taxonomic scope" value="Bacteria"/>
</dbReference>
<dbReference type="HOGENOM" id="CLU_009273_0_1_6"/>
<dbReference type="OrthoDB" id="9763993at2"/>
<dbReference type="UniPathway" id="UPA00344"/>
<dbReference type="GO" id="GO:0051539">
    <property type="term" value="F:4 iron, 4 sulfur cluster binding"/>
    <property type="evidence" value="ECO:0007669"/>
    <property type="project" value="UniProtKB-UniRule"/>
</dbReference>
<dbReference type="GO" id="GO:0061799">
    <property type="term" value="F:cyclic pyranopterin monophosphate synthase activity"/>
    <property type="evidence" value="ECO:0007669"/>
    <property type="project" value="TreeGrafter"/>
</dbReference>
<dbReference type="GO" id="GO:0061798">
    <property type="term" value="F:GTP 3',8'-cyclase activity"/>
    <property type="evidence" value="ECO:0007669"/>
    <property type="project" value="UniProtKB-UniRule"/>
</dbReference>
<dbReference type="GO" id="GO:0005525">
    <property type="term" value="F:GTP binding"/>
    <property type="evidence" value="ECO:0007669"/>
    <property type="project" value="UniProtKB-UniRule"/>
</dbReference>
<dbReference type="GO" id="GO:0046872">
    <property type="term" value="F:metal ion binding"/>
    <property type="evidence" value="ECO:0007669"/>
    <property type="project" value="UniProtKB-KW"/>
</dbReference>
<dbReference type="GO" id="GO:1904047">
    <property type="term" value="F:S-adenosyl-L-methionine binding"/>
    <property type="evidence" value="ECO:0007669"/>
    <property type="project" value="UniProtKB-UniRule"/>
</dbReference>
<dbReference type="GO" id="GO:0006777">
    <property type="term" value="P:Mo-molybdopterin cofactor biosynthetic process"/>
    <property type="evidence" value="ECO:0007669"/>
    <property type="project" value="UniProtKB-UniRule"/>
</dbReference>
<dbReference type="CDD" id="cd01335">
    <property type="entry name" value="Radical_SAM"/>
    <property type="match status" value="1"/>
</dbReference>
<dbReference type="CDD" id="cd21117">
    <property type="entry name" value="Twitch_MoaA"/>
    <property type="match status" value="1"/>
</dbReference>
<dbReference type="Gene3D" id="3.20.20.70">
    <property type="entry name" value="Aldolase class I"/>
    <property type="match status" value="1"/>
</dbReference>
<dbReference type="HAMAP" id="MF_01225_B">
    <property type="entry name" value="MoaA_B"/>
    <property type="match status" value="1"/>
</dbReference>
<dbReference type="InterPro" id="IPR013785">
    <property type="entry name" value="Aldolase_TIM"/>
</dbReference>
<dbReference type="InterPro" id="IPR006638">
    <property type="entry name" value="Elp3/MiaA/NifB-like_rSAM"/>
</dbReference>
<dbReference type="InterPro" id="IPR013483">
    <property type="entry name" value="MoaA"/>
</dbReference>
<dbReference type="InterPro" id="IPR000385">
    <property type="entry name" value="MoaA_NifB_PqqE_Fe-S-bd_CS"/>
</dbReference>
<dbReference type="InterPro" id="IPR010505">
    <property type="entry name" value="MoaA_twitch"/>
</dbReference>
<dbReference type="InterPro" id="IPR050105">
    <property type="entry name" value="MoCo_biosynth_MoaA/MoaC"/>
</dbReference>
<dbReference type="InterPro" id="IPR007197">
    <property type="entry name" value="rSAM"/>
</dbReference>
<dbReference type="NCBIfam" id="TIGR02666">
    <property type="entry name" value="moaA"/>
    <property type="match status" value="1"/>
</dbReference>
<dbReference type="PANTHER" id="PTHR22960:SF0">
    <property type="entry name" value="MOLYBDENUM COFACTOR BIOSYNTHESIS PROTEIN 1"/>
    <property type="match status" value="1"/>
</dbReference>
<dbReference type="PANTHER" id="PTHR22960">
    <property type="entry name" value="MOLYBDOPTERIN COFACTOR SYNTHESIS PROTEIN A"/>
    <property type="match status" value="1"/>
</dbReference>
<dbReference type="Pfam" id="PF13353">
    <property type="entry name" value="Fer4_12"/>
    <property type="match status" value="1"/>
</dbReference>
<dbReference type="Pfam" id="PF06463">
    <property type="entry name" value="Mob_synth_C"/>
    <property type="match status" value="1"/>
</dbReference>
<dbReference type="Pfam" id="PF04055">
    <property type="entry name" value="Radical_SAM"/>
    <property type="match status" value="1"/>
</dbReference>
<dbReference type="SFLD" id="SFLDG01383">
    <property type="entry name" value="cyclic_pyranopterin_phosphate"/>
    <property type="match status" value="1"/>
</dbReference>
<dbReference type="SFLD" id="SFLDG01067">
    <property type="entry name" value="SPASM/twitch_domain_containing"/>
    <property type="match status" value="1"/>
</dbReference>
<dbReference type="SMART" id="SM00729">
    <property type="entry name" value="Elp3"/>
    <property type="match status" value="1"/>
</dbReference>
<dbReference type="SUPFAM" id="SSF102114">
    <property type="entry name" value="Radical SAM enzymes"/>
    <property type="match status" value="1"/>
</dbReference>
<dbReference type="PROSITE" id="PS01305">
    <property type="entry name" value="MOAA_NIFB_PQQE"/>
    <property type="match status" value="1"/>
</dbReference>
<dbReference type="PROSITE" id="PS51918">
    <property type="entry name" value="RADICAL_SAM"/>
    <property type="match status" value="1"/>
</dbReference>